<comment type="function">
    <text evidence="1">dGTPase preferentially hydrolyzes dGTP over the other canonical NTPs.</text>
</comment>
<comment type="catalytic activity">
    <reaction evidence="1">
        <text>dGTP + H2O = 2'-deoxyguanosine + triphosphate + H(+)</text>
        <dbReference type="Rhea" id="RHEA:15193"/>
        <dbReference type="ChEBI" id="CHEBI:15377"/>
        <dbReference type="ChEBI" id="CHEBI:15378"/>
        <dbReference type="ChEBI" id="CHEBI:17172"/>
        <dbReference type="ChEBI" id="CHEBI:18036"/>
        <dbReference type="ChEBI" id="CHEBI:61429"/>
        <dbReference type="EC" id="3.1.5.1"/>
    </reaction>
</comment>
<comment type="cofactor">
    <cofactor evidence="1">
        <name>Mg(2+)</name>
        <dbReference type="ChEBI" id="CHEBI:18420"/>
    </cofactor>
</comment>
<comment type="subunit">
    <text evidence="1">Homotetramer.</text>
</comment>
<comment type="similarity">
    <text evidence="1">Belongs to the dGTPase family. Type 1 subfamily.</text>
</comment>
<proteinExistence type="inferred from homology"/>
<sequence length="505" mass="58284">MSGIDFKQKISFQRPFSKPIEAEEEYDIVRQFESDRGRIVNSAAIRRLQQKTQVFPLERNAAVRSRLTHSMEVQQVGRHIAKEILNRFKQDGRVDALGLTKLLDPFESIVEMACLMHDIGNPPFGHFGESAINNWFSQRLDPASCGSEPASNDRCQVSALRLHEGESDLNRLRSRIRHDLSHFEGNAQAIRLVHTLLKLNLTYAQVGCILKYTRPAYWASDIPASHNYLMKKPGFYLAEEAFVDRLRRELNMGEFDRFPLTYIMEAADDISYCVADLEDAVEKNIFTVEQLYQHLTQEWGEVTPGDLFDKTVASAFRKIAHGGARRSSEDQFFMYLRVFTVARLVPHAAQRFIDNLEAVYQGNFNQALLEDSSPAYQLLKIFKNVAFKHVFNHPEVEQLELQGYRVISGLLDIYSPLLAMPLADFTLLVQEDSHRAYPIETRLFHKLSTKHRLAYIEAIEGLQHLSPEQLAIREYYFRARLLQDYISGMTDLYAYDEYRRLMAAE</sequence>
<gene>
    <name evidence="1" type="primary">dgt</name>
    <name type="ordered locus">Spro_0788</name>
</gene>
<dbReference type="EC" id="3.1.5.1" evidence="1"/>
<dbReference type="EMBL" id="CP000826">
    <property type="protein sequence ID" value="ABV39894.1"/>
    <property type="molecule type" value="Genomic_DNA"/>
</dbReference>
<dbReference type="SMR" id="A8G9V4"/>
<dbReference type="STRING" id="399741.Spro_0788"/>
<dbReference type="KEGG" id="spe:Spro_0788"/>
<dbReference type="eggNOG" id="COG0232">
    <property type="taxonomic scope" value="Bacteria"/>
</dbReference>
<dbReference type="HOGENOM" id="CLU_028163_2_1_6"/>
<dbReference type="OrthoDB" id="9803619at2"/>
<dbReference type="GO" id="GO:0008832">
    <property type="term" value="F:dGTPase activity"/>
    <property type="evidence" value="ECO:0007669"/>
    <property type="project" value="UniProtKB-UniRule"/>
</dbReference>
<dbReference type="GO" id="GO:0000287">
    <property type="term" value="F:magnesium ion binding"/>
    <property type="evidence" value="ECO:0007669"/>
    <property type="project" value="UniProtKB-UniRule"/>
</dbReference>
<dbReference type="GO" id="GO:0006203">
    <property type="term" value="P:dGTP catabolic process"/>
    <property type="evidence" value="ECO:0007669"/>
    <property type="project" value="InterPro"/>
</dbReference>
<dbReference type="CDD" id="cd00077">
    <property type="entry name" value="HDc"/>
    <property type="match status" value="1"/>
</dbReference>
<dbReference type="FunFam" id="1.10.3210.10:FF:000009">
    <property type="entry name" value="Deoxyguanosinetriphosphate triphosphohydrolase"/>
    <property type="match status" value="1"/>
</dbReference>
<dbReference type="FunFam" id="1.10.3210.10:FF:000010">
    <property type="entry name" value="Deoxyguanosinetriphosphate triphosphohydrolase"/>
    <property type="match status" value="1"/>
</dbReference>
<dbReference type="FunFam" id="1.10.3410.10:FF:000001">
    <property type="entry name" value="Deoxyguanosinetriphosphate triphosphohydrolase"/>
    <property type="match status" value="1"/>
</dbReference>
<dbReference type="Gene3D" id="1.10.3210.10">
    <property type="entry name" value="Hypothetical protein af1432"/>
    <property type="match status" value="2"/>
</dbReference>
<dbReference type="Gene3D" id="1.10.3410.10">
    <property type="entry name" value="putative deoxyguanosinetriphosphate triphosphohydrolase like domain"/>
    <property type="match status" value="1"/>
</dbReference>
<dbReference type="HAMAP" id="MF_00030">
    <property type="entry name" value="dGTPase_type1"/>
    <property type="match status" value="1"/>
</dbReference>
<dbReference type="InterPro" id="IPR023293">
    <property type="entry name" value="dGTP_triP_hydro_central_sf"/>
</dbReference>
<dbReference type="InterPro" id="IPR006261">
    <property type="entry name" value="dGTPase"/>
</dbReference>
<dbReference type="InterPro" id="IPR050135">
    <property type="entry name" value="dGTPase-like"/>
</dbReference>
<dbReference type="InterPro" id="IPR020779">
    <property type="entry name" value="dNTPase_1"/>
</dbReference>
<dbReference type="InterPro" id="IPR003607">
    <property type="entry name" value="HD/PDEase_dom"/>
</dbReference>
<dbReference type="InterPro" id="IPR006674">
    <property type="entry name" value="HD_domain"/>
</dbReference>
<dbReference type="NCBIfam" id="TIGR01353">
    <property type="entry name" value="dGTP_triPase"/>
    <property type="match status" value="1"/>
</dbReference>
<dbReference type="NCBIfam" id="NF003429">
    <property type="entry name" value="PRK04926.1"/>
    <property type="match status" value="1"/>
</dbReference>
<dbReference type="PANTHER" id="PTHR11373:SF32">
    <property type="entry name" value="DEOXYGUANOSINETRIPHOSPHATE TRIPHOSPHOHYDROLASE"/>
    <property type="match status" value="1"/>
</dbReference>
<dbReference type="PANTHER" id="PTHR11373">
    <property type="entry name" value="DEOXYNUCLEOSIDE TRIPHOSPHATE TRIPHOSPHOHYDROLASE"/>
    <property type="match status" value="1"/>
</dbReference>
<dbReference type="Pfam" id="PF01966">
    <property type="entry name" value="HD"/>
    <property type="match status" value="1"/>
</dbReference>
<dbReference type="SMART" id="SM00471">
    <property type="entry name" value="HDc"/>
    <property type="match status" value="1"/>
</dbReference>
<dbReference type="SUPFAM" id="SSF109604">
    <property type="entry name" value="HD-domain/PDEase-like"/>
    <property type="match status" value="1"/>
</dbReference>
<dbReference type="PROSITE" id="PS51831">
    <property type="entry name" value="HD"/>
    <property type="match status" value="1"/>
</dbReference>
<accession>A8G9V4</accession>
<keyword id="KW-0378">Hydrolase</keyword>
<keyword id="KW-0460">Magnesium</keyword>
<reference key="1">
    <citation type="submission" date="2007-09" db="EMBL/GenBank/DDBJ databases">
        <title>Complete sequence of chromosome of Serratia proteamaculans 568.</title>
        <authorList>
            <consortium name="US DOE Joint Genome Institute"/>
            <person name="Copeland A."/>
            <person name="Lucas S."/>
            <person name="Lapidus A."/>
            <person name="Barry K."/>
            <person name="Glavina del Rio T."/>
            <person name="Dalin E."/>
            <person name="Tice H."/>
            <person name="Pitluck S."/>
            <person name="Chain P."/>
            <person name="Malfatti S."/>
            <person name="Shin M."/>
            <person name="Vergez L."/>
            <person name="Schmutz J."/>
            <person name="Larimer F."/>
            <person name="Land M."/>
            <person name="Hauser L."/>
            <person name="Kyrpides N."/>
            <person name="Kim E."/>
            <person name="Taghavi S."/>
            <person name="Newman L."/>
            <person name="Vangronsveld J."/>
            <person name="van der Lelie D."/>
            <person name="Richardson P."/>
        </authorList>
    </citation>
    <scope>NUCLEOTIDE SEQUENCE [LARGE SCALE GENOMIC DNA]</scope>
    <source>
        <strain>568</strain>
    </source>
</reference>
<protein>
    <recommendedName>
        <fullName evidence="1">Deoxyguanosinetriphosphate triphosphohydrolase</fullName>
        <shortName evidence="1">dGTP triphosphohydrolase</shortName>
        <shortName evidence="1">dGTPase</shortName>
        <ecNumber evidence="1">3.1.5.1</ecNumber>
    </recommendedName>
</protein>
<organism>
    <name type="scientific">Serratia proteamaculans (strain 568)</name>
    <dbReference type="NCBI Taxonomy" id="399741"/>
    <lineage>
        <taxon>Bacteria</taxon>
        <taxon>Pseudomonadati</taxon>
        <taxon>Pseudomonadota</taxon>
        <taxon>Gammaproteobacteria</taxon>
        <taxon>Enterobacterales</taxon>
        <taxon>Yersiniaceae</taxon>
        <taxon>Serratia</taxon>
    </lineage>
</organism>
<evidence type="ECO:0000255" key="1">
    <source>
        <dbReference type="HAMAP-Rule" id="MF_00030"/>
    </source>
</evidence>
<evidence type="ECO:0000255" key="2">
    <source>
        <dbReference type="PROSITE-ProRule" id="PRU01175"/>
    </source>
</evidence>
<feature type="chain" id="PRO_1000057230" description="Deoxyguanosinetriphosphate triphosphohydrolase">
    <location>
        <begin position="1"/>
        <end position="505"/>
    </location>
</feature>
<feature type="domain" description="HD" evidence="2">
    <location>
        <begin position="66"/>
        <end position="273"/>
    </location>
</feature>
<name>DGTP_SERP5</name>